<dbReference type="EC" id="5.99.-.-" evidence="1"/>
<dbReference type="EMBL" id="AL123456">
    <property type="protein sequence ID" value="CCP45515.1"/>
    <property type="molecule type" value="Genomic_DNA"/>
</dbReference>
<dbReference type="PIR" id="H70532">
    <property type="entry name" value="H70532"/>
</dbReference>
<dbReference type="RefSeq" id="NP_217233.1">
    <property type="nucleotide sequence ID" value="NC_000962.3"/>
</dbReference>
<dbReference type="RefSeq" id="WP_003900559.1">
    <property type="nucleotide sequence ID" value="NZ_NVQJ01000017.1"/>
</dbReference>
<dbReference type="PDB" id="2FR2">
    <property type="method" value="X-ray"/>
    <property type="resolution" value="1.50 A"/>
    <property type="chains" value="A=1-164"/>
</dbReference>
<dbReference type="PDB" id="6R3W">
    <property type="method" value="X-ray"/>
    <property type="resolution" value="1.20 A"/>
    <property type="chains" value="A=1-164"/>
</dbReference>
<dbReference type="PDB" id="6R3Y">
    <property type="method" value="X-ray"/>
    <property type="resolution" value="1.60 A"/>
    <property type="chains" value="A=1-164"/>
</dbReference>
<dbReference type="PDBsum" id="2FR2"/>
<dbReference type="PDBsum" id="6R3W"/>
<dbReference type="PDBsum" id="6R3Y"/>
<dbReference type="SMR" id="P9WFG7"/>
<dbReference type="STRING" id="83332.Rv2717c"/>
<dbReference type="PaxDb" id="83332-Rv2717c"/>
<dbReference type="DNASU" id="887284"/>
<dbReference type="GeneID" id="887284"/>
<dbReference type="KEGG" id="mtu:Rv2717c"/>
<dbReference type="KEGG" id="mtv:RVBD_2717c"/>
<dbReference type="TubercuList" id="Rv2717c"/>
<dbReference type="eggNOG" id="COG4044">
    <property type="taxonomic scope" value="Bacteria"/>
</dbReference>
<dbReference type="InParanoid" id="P9WFG7"/>
<dbReference type="OrthoDB" id="4804006at2"/>
<dbReference type="PhylomeDB" id="P9WFG7"/>
<dbReference type="EvolutionaryTrace" id="P9WFG7"/>
<dbReference type="Proteomes" id="UP000001584">
    <property type="component" value="Chromosome"/>
</dbReference>
<dbReference type="GO" id="GO:0020037">
    <property type="term" value="F:heme binding"/>
    <property type="evidence" value="ECO:0007669"/>
    <property type="project" value="UniProtKB-UniRule"/>
</dbReference>
<dbReference type="GO" id="GO:0046872">
    <property type="term" value="F:metal ion binding"/>
    <property type="evidence" value="ECO:0007669"/>
    <property type="project" value="UniProtKB-KW"/>
</dbReference>
<dbReference type="GO" id="GO:0062213">
    <property type="term" value="F:peroxynitrite isomerase activity"/>
    <property type="evidence" value="ECO:0007669"/>
    <property type="project" value="UniProtKB-UniRule"/>
</dbReference>
<dbReference type="CDD" id="cd07828">
    <property type="entry name" value="lipocalin_heme-bd-THAP4-like"/>
    <property type="match status" value="1"/>
</dbReference>
<dbReference type="Gene3D" id="2.40.128.20">
    <property type="match status" value="1"/>
</dbReference>
<dbReference type="HAMAP" id="MF_01297">
    <property type="entry name" value="nitrobindin"/>
    <property type="match status" value="1"/>
</dbReference>
<dbReference type="InterPro" id="IPR012674">
    <property type="entry name" value="Calycin"/>
</dbReference>
<dbReference type="InterPro" id="IPR022939">
    <property type="entry name" value="Nb(III)_bact/plant"/>
</dbReference>
<dbReference type="InterPro" id="IPR045165">
    <property type="entry name" value="Nitrobindin"/>
</dbReference>
<dbReference type="InterPro" id="IPR054873">
    <property type="entry name" value="PeroxynitIsom"/>
</dbReference>
<dbReference type="InterPro" id="IPR014878">
    <property type="entry name" value="THAP4-like_heme-bd"/>
</dbReference>
<dbReference type="NCBIfam" id="NF045819">
    <property type="entry name" value="PeroxynitIsom"/>
    <property type="match status" value="1"/>
</dbReference>
<dbReference type="PANTHER" id="PTHR15854:SF4">
    <property type="entry name" value="PEROXYNITRITE ISOMERASE THAP4"/>
    <property type="match status" value="1"/>
</dbReference>
<dbReference type="PANTHER" id="PTHR15854">
    <property type="entry name" value="THAP4 PROTEIN"/>
    <property type="match status" value="1"/>
</dbReference>
<dbReference type="Pfam" id="PF08768">
    <property type="entry name" value="THAP4_heme-bd"/>
    <property type="match status" value="1"/>
</dbReference>
<dbReference type="SUPFAM" id="SSF50814">
    <property type="entry name" value="Lipocalins"/>
    <property type="match status" value="1"/>
</dbReference>
<name>NB1_MYCTU</name>
<protein>
    <recommendedName>
        <fullName evidence="5">Peroxynitrite isomerase 1</fullName>
        <ecNumber evidence="1">5.99.-.-</ecNumber>
    </recommendedName>
    <alternativeName>
        <fullName evidence="3">Ferric Mycobacterium tuberculosis nitrobindin</fullName>
        <shortName evidence="3">Mt-Nb(III)</shortName>
    </alternativeName>
</protein>
<evidence type="ECO:0000269" key="1">
    <source>
    </source>
</evidence>
<evidence type="ECO:0000269" key="2">
    <source ref="4"/>
</evidence>
<evidence type="ECO:0000303" key="3">
    <source>
    </source>
</evidence>
<evidence type="ECO:0000305" key="4"/>
<evidence type="ECO:0000305" key="5">
    <source>
    </source>
</evidence>
<evidence type="ECO:0000305" key="6">
    <source ref="4"/>
</evidence>
<evidence type="ECO:0007744" key="7">
    <source>
        <dbReference type="PDB" id="6R3W"/>
    </source>
</evidence>
<evidence type="ECO:0007744" key="8">
    <source>
        <dbReference type="PDB" id="6R3Y"/>
    </source>
</evidence>
<evidence type="ECO:0007829" key="9">
    <source>
        <dbReference type="PDB" id="6R3W"/>
    </source>
</evidence>
<feature type="chain" id="PRO_0000356934" description="Peroxynitrite isomerase 1">
    <location>
        <begin position="1"/>
        <end position="164"/>
    </location>
</feature>
<feature type="short sequence motif" description="GXWXGXG">
    <location>
        <begin position="17"/>
        <end position="23"/>
    </location>
</feature>
<feature type="binding site" evidence="1 7">
    <location>
        <position position="29"/>
    </location>
    <ligand>
        <name>heme b</name>
        <dbReference type="ChEBI" id="CHEBI:60344"/>
    </ligand>
</feature>
<feature type="binding site" evidence="1 7">
    <location>
        <position position="123"/>
    </location>
    <ligand>
        <name>heme b</name>
        <dbReference type="ChEBI" id="CHEBI:60344"/>
    </ligand>
</feature>
<feature type="binding site" description="axial binding residue" evidence="1 7">
    <location>
        <position position="155"/>
    </location>
    <ligand>
        <name>heme b</name>
        <dbReference type="ChEBI" id="CHEBI:60344"/>
    </ligand>
    <ligandPart>
        <name>Fe</name>
        <dbReference type="ChEBI" id="CHEBI:18248"/>
    </ligandPart>
</feature>
<feature type="helix" evidence="9">
    <location>
        <begin position="7"/>
        <end position="15"/>
    </location>
</feature>
<feature type="strand" evidence="9">
    <location>
        <begin position="17"/>
        <end position="25"/>
    </location>
</feature>
<feature type="strand" evidence="9">
    <location>
        <begin position="33"/>
        <end position="42"/>
    </location>
</feature>
<feature type="strand" evidence="9">
    <location>
        <begin position="44"/>
        <end position="57"/>
    </location>
</feature>
<feature type="turn" evidence="9">
    <location>
        <begin position="58"/>
        <end position="60"/>
    </location>
</feature>
<feature type="strand" evidence="9">
    <location>
        <begin position="63"/>
        <end position="75"/>
    </location>
</feature>
<feature type="strand" evidence="9">
    <location>
        <begin position="78"/>
        <end position="85"/>
    </location>
</feature>
<feature type="turn" evidence="9">
    <location>
        <begin position="86"/>
        <end position="88"/>
    </location>
</feature>
<feature type="strand" evidence="9">
    <location>
        <begin position="89"/>
        <end position="100"/>
    </location>
</feature>
<feature type="strand" evidence="9">
    <location>
        <begin position="103"/>
        <end position="109"/>
    </location>
</feature>
<feature type="turn" evidence="9">
    <location>
        <begin position="110"/>
        <end position="113"/>
    </location>
</feature>
<feature type="strand" evidence="9">
    <location>
        <begin position="115"/>
        <end position="118"/>
    </location>
</feature>
<feature type="strand" evidence="9">
    <location>
        <begin position="125"/>
        <end position="135"/>
    </location>
</feature>
<feature type="strand" evidence="9">
    <location>
        <begin position="138"/>
        <end position="147"/>
    </location>
</feature>
<feature type="strand" evidence="9">
    <location>
        <begin position="150"/>
        <end position="162"/>
    </location>
</feature>
<organism>
    <name type="scientific">Mycobacterium tuberculosis (strain ATCC 25618 / H37Rv)</name>
    <dbReference type="NCBI Taxonomy" id="83332"/>
    <lineage>
        <taxon>Bacteria</taxon>
        <taxon>Bacillati</taxon>
        <taxon>Actinomycetota</taxon>
        <taxon>Actinomycetes</taxon>
        <taxon>Mycobacteriales</taxon>
        <taxon>Mycobacteriaceae</taxon>
        <taxon>Mycobacterium</taxon>
        <taxon>Mycobacterium tuberculosis complex</taxon>
    </lineage>
</organism>
<sequence>MTRDLAPALQALSPLLGSWAGRGAGKYPTIRPFEYLEEVVFAHVGKPFLTYTQQTRAVADGKPLHSETGYLRVCRPGCVELVLAHPSGITEIEVGTYSVTGDVIELELSTRADGSIGLAPTAKEVTALDRSYRIDGDELSYSLQMRAVGQPLQDHLAAVLHRQR</sequence>
<comment type="function">
    <text evidence="1">Heme-binding protein able to scavenge peroxynitrite and to protect free L-tyrosine against peroxynitrite-mediated nitration, by acting as a peroxynitrite isomerase that converts peroxynitrite to nitrate. Therefore, this protein likely plays a role in peroxynitrite sensing and in the detoxification of reactive nitrogen and oxygen species (RNS and ROS, respectively). In M.tuberculosis, could be part of the pool of proteins required to scavenge RNS and ROS produced by the host during the immunity response. Is able to bind nitric oxide (NO) in vitro, but may act as a sensor of peroxynitrite levels in vivo.</text>
</comment>
<comment type="catalytic activity">
    <reaction evidence="1">
        <text>peroxynitrite = nitrate</text>
        <dbReference type="Rhea" id="RHEA:63116"/>
        <dbReference type="ChEBI" id="CHEBI:17632"/>
        <dbReference type="ChEBI" id="CHEBI:25941"/>
    </reaction>
    <physiologicalReaction direction="left-to-right" evidence="5">
        <dbReference type="Rhea" id="RHEA:63117"/>
    </physiologicalReaction>
</comment>
<comment type="cofactor">
    <cofactor evidence="1">
        <name>heme b</name>
        <dbReference type="ChEBI" id="CHEBI:60344"/>
    </cofactor>
    <text evidence="1">Binds 1 heme b group per subunit, that coordinates a highly solvent-exposed Fe(III) atom.</text>
</comment>
<comment type="pathway">
    <text evidence="5">Nitrogen metabolism.</text>
</comment>
<comment type="subunit">
    <text evidence="6">Homodimer.</text>
</comment>
<comment type="domain">
    <text evidence="1 2">Forms a 10-stranded antiparallel beta-barrel structure able to accommodate a hydrophobic ligand in its interior (Ref.4). In fact, this fold hosts the heme group, which is located in a wide surface cleft (PubMed:32295384).</text>
</comment>
<comment type="similarity">
    <text evidence="4">Belongs to the nitrobindin family.</text>
</comment>
<reference key="1">
    <citation type="journal article" date="1998" name="Nature">
        <title>Deciphering the biology of Mycobacterium tuberculosis from the complete genome sequence.</title>
        <authorList>
            <person name="Cole S.T."/>
            <person name="Brosch R."/>
            <person name="Parkhill J."/>
            <person name="Garnier T."/>
            <person name="Churcher C.M."/>
            <person name="Harris D.E."/>
            <person name="Gordon S.V."/>
            <person name="Eiglmeier K."/>
            <person name="Gas S."/>
            <person name="Barry C.E. III"/>
            <person name="Tekaia F."/>
            <person name="Badcock K."/>
            <person name="Basham D."/>
            <person name="Brown D."/>
            <person name="Chillingworth T."/>
            <person name="Connor R."/>
            <person name="Davies R.M."/>
            <person name="Devlin K."/>
            <person name="Feltwell T."/>
            <person name="Gentles S."/>
            <person name="Hamlin N."/>
            <person name="Holroyd S."/>
            <person name="Hornsby T."/>
            <person name="Jagels K."/>
            <person name="Krogh A."/>
            <person name="McLean J."/>
            <person name="Moule S."/>
            <person name="Murphy L.D."/>
            <person name="Oliver S."/>
            <person name="Osborne J."/>
            <person name="Quail M.A."/>
            <person name="Rajandream M.A."/>
            <person name="Rogers J."/>
            <person name="Rutter S."/>
            <person name="Seeger K."/>
            <person name="Skelton S."/>
            <person name="Squares S."/>
            <person name="Squares R."/>
            <person name="Sulston J.E."/>
            <person name="Taylor K."/>
            <person name="Whitehead S."/>
            <person name="Barrell B.G."/>
        </authorList>
    </citation>
    <scope>NUCLEOTIDE SEQUENCE [LARGE SCALE GENOMIC DNA]</scope>
    <source>
        <strain>ATCC 25618 / H37Rv</strain>
    </source>
</reference>
<reference key="2">
    <citation type="journal article" date="2002" name="Microbiology">
        <title>Re-annotation of the genome sequence of Mycobacterium tuberculosis H37Rv.</title>
        <authorList>
            <person name="Camus J.-C."/>
            <person name="Pryor M.J."/>
            <person name="Medigue C."/>
            <person name="Cole S.T."/>
        </authorList>
    </citation>
    <scope>IDENTIFICATION</scope>
    <source>
        <strain>ATCC 25618 / H37Rv</strain>
    </source>
</reference>
<reference key="3">
    <citation type="journal article" date="2011" name="Mol. Cell. Proteomics">
        <title>Proteogenomic analysis of Mycobacterium tuberculosis by high resolution mass spectrometry.</title>
        <authorList>
            <person name="Kelkar D.S."/>
            <person name="Kumar D."/>
            <person name="Kumar P."/>
            <person name="Balakrishnan L."/>
            <person name="Muthusamy B."/>
            <person name="Yadav A.K."/>
            <person name="Shrivastava P."/>
            <person name="Marimuthu A."/>
            <person name="Anand S."/>
            <person name="Sundaram H."/>
            <person name="Kingsbury R."/>
            <person name="Harsha H.C."/>
            <person name="Nair B."/>
            <person name="Prasad T.S."/>
            <person name="Chauhan D.S."/>
            <person name="Katoch K."/>
            <person name="Katoch V.M."/>
            <person name="Kumar P."/>
            <person name="Chaerkady R."/>
            <person name="Ramachandran S."/>
            <person name="Dash D."/>
            <person name="Pandey A."/>
        </authorList>
    </citation>
    <scope>IDENTIFICATION BY MASS SPECTROMETRY [LARGE SCALE ANALYSIS]</scope>
    <source>
        <strain>ATCC 25618 / H37Rv</strain>
    </source>
</reference>
<reference key="4">
    <citation type="submission" date="2006-01" db="PDB data bank">
        <title>Crystal structure of Rv2717c from Mycobacterium tuberculosis.</title>
        <authorList>
            <consortium name="Mycobacterium tuberculosis structural genomics consortium (TB)"/>
        </authorList>
    </citation>
    <scope>X-RAY CRYSTALLOGRAPHY (1.5 ANGSTROMS)</scope>
    <scope>DOMAIN</scope>
    <scope>SUBUNIT</scope>
</reference>
<reference evidence="7 8" key="5">
    <citation type="journal article" date="2020" name="Antioxid. Redox Signal.">
        <title>Mycobacterial and Human Nitrobindins: Structure and Function.</title>
        <authorList>
            <person name="De Simone G."/>
            <person name="di Masi A."/>
            <person name="Vita G.M."/>
            <person name="Polticelli F."/>
            <person name="Pesce A."/>
            <person name="Nardini M."/>
            <person name="Bolognesi M."/>
            <person name="Ciaccio C."/>
            <person name="Coletta M."/>
            <person name="Turilli E.S."/>
            <person name="Fasano M."/>
            <person name="Tognaccini L."/>
            <person name="Smulevich G."/>
            <person name="Abbruzzetti S."/>
            <person name="Viappiani C."/>
            <person name="Bruno S."/>
            <person name="Ascenzi P."/>
        </authorList>
    </citation>
    <scope>X-RAY CRYSTALLOGRAPHY (1.20 ANGSTROMS) IN COMPLEX WITH HEME</scope>
    <scope>FUNCTION</scope>
    <scope>CATALYTIC ACTIVITY</scope>
    <scope>COFACTOR</scope>
    <scope>NO-BINDING</scope>
</reference>
<gene>
    <name type="ordered locus">Rv2717c</name>
</gene>
<proteinExistence type="evidence at protein level"/>
<accession>P9WFG7</accession>
<accession>L0TAF4</accession>
<accession>O07216</accession>
<accession>Q7D6Q1</accession>
<keyword id="KW-0002">3D-structure</keyword>
<keyword id="KW-0349">Heme</keyword>
<keyword id="KW-0408">Iron</keyword>
<keyword id="KW-0413">Isomerase</keyword>
<keyword id="KW-0479">Metal-binding</keyword>
<keyword id="KW-1185">Reference proteome</keyword>